<accession>A0R0W2</accession>
<accession>I7GDN9</accession>
<comment type="function">
    <text evidence="1 2">Catalyzes the formation of sulfite from adenosine 5'-phosphosulfate (APS) using thioredoxin as an electron donor.</text>
</comment>
<comment type="catalytic activity">
    <reaction evidence="1 2">
        <text>[thioredoxin]-disulfide + sulfite + AMP + 2 H(+) = adenosine 5'-phosphosulfate + [thioredoxin]-dithiol</text>
        <dbReference type="Rhea" id="RHEA:21976"/>
        <dbReference type="Rhea" id="RHEA-COMP:10698"/>
        <dbReference type="Rhea" id="RHEA-COMP:10700"/>
        <dbReference type="ChEBI" id="CHEBI:15378"/>
        <dbReference type="ChEBI" id="CHEBI:17359"/>
        <dbReference type="ChEBI" id="CHEBI:29950"/>
        <dbReference type="ChEBI" id="CHEBI:50058"/>
        <dbReference type="ChEBI" id="CHEBI:58243"/>
        <dbReference type="ChEBI" id="CHEBI:456215"/>
        <dbReference type="EC" id="1.8.4.10"/>
    </reaction>
</comment>
<comment type="cofactor">
    <cofactor evidence="1">
        <name>[4Fe-4S] cluster</name>
        <dbReference type="ChEBI" id="CHEBI:49883"/>
    </cofactor>
    <text evidence="1">Binds 1 [4Fe-4S] cluster per subunit.</text>
</comment>
<comment type="pathway">
    <text evidence="1 5">Sulfur metabolism; hydrogen sulfide biosynthesis; sulfite from sulfate.</text>
</comment>
<comment type="subcellular location">
    <subcellularLocation>
        <location evidence="1">Cytoplasm</location>
    </subcellularLocation>
</comment>
<comment type="disruption phenotype">
    <text evidence="2">Deletion of the gene confers cysteine and methionine auxotrophy.</text>
</comment>
<comment type="similarity">
    <text evidence="1">Belongs to the PAPS reductase family. CysH subfamily.</text>
</comment>
<comment type="sequence caution" evidence="4">
    <conflict type="erroneous initiation">
        <sequence resource="EMBL-CDS" id="AFP40869"/>
    </conflict>
    <text>Extended N-terminus.</text>
</comment>
<feature type="chain" id="PRO_0000452768" description="Adenosine 5'-phosphosulfate reductase">
    <location>
        <begin position="1"/>
        <end position="236"/>
    </location>
</feature>
<feature type="active site" description="Nucleophile; cysteine thiosulfonate intermediate" evidence="1">
    <location>
        <position position="231"/>
    </location>
</feature>
<feature type="binding site" evidence="1">
    <location>
        <position position="122"/>
    </location>
    <ligand>
        <name>[4Fe-4S] cluster</name>
        <dbReference type="ChEBI" id="CHEBI:49883"/>
    </ligand>
</feature>
<feature type="binding site" evidence="1">
    <location>
        <position position="123"/>
    </location>
    <ligand>
        <name>[4Fe-4S] cluster</name>
        <dbReference type="ChEBI" id="CHEBI:49883"/>
    </ligand>
</feature>
<feature type="binding site" evidence="1">
    <location>
        <position position="205"/>
    </location>
    <ligand>
        <name>[4Fe-4S] cluster</name>
        <dbReference type="ChEBI" id="CHEBI:49883"/>
    </ligand>
</feature>
<feature type="binding site" evidence="1">
    <location>
        <position position="208"/>
    </location>
    <ligand>
        <name>[4Fe-4S] cluster</name>
        <dbReference type="ChEBI" id="CHEBI:49883"/>
    </ligand>
</feature>
<protein>
    <recommendedName>
        <fullName evidence="1 3">Adenosine 5'-phosphosulfate reductase</fullName>
        <shortName evidence="1 3">APS reductase</shortName>
        <ecNumber evidence="1 2">1.8.4.10</ecNumber>
    </recommendedName>
    <alternativeName>
        <fullName evidence="1">5'-adenylylsulfate reductase</fullName>
    </alternativeName>
    <alternativeName>
        <fullName evidence="1">Thioredoxin-dependent 5'-adenylylsulfate reductase</fullName>
    </alternativeName>
</protein>
<sequence>MTDVTTSTENELRELAERGAAELADASAEELLRWTDEHFGGNYVVASNMQDAVLVEMAAKVRPGVDVLFLDTGYHFAETIGTRDAVEAVYDVHVVNVTPERTVAEQDELLGKNLFARDPGECCRLRKVVPLTNALKGYSAWVTGIRRVEAPTRANAPLISWDNAFGLVKINPIAAWTDEDMQNYIDANGILVNPLVYEGYPSIGCAPCTSKPIPGADPRSGRWAGLSKTECGLHVS</sequence>
<evidence type="ECO:0000255" key="1">
    <source>
        <dbReference type="HAMAP-Rule" id="MF_00063"/>
    </source>
</evidence>
<evidence type="ECO:0000269" key="2">
    <source>
    </source>
</evidence>
<evidence type="ECO:0000303" key="3">
    <source>
    </source>
</evidence>
<evidence type="ECO:0000305" key="4"/>
<evidence type="ECO:0000305" key="5">
    <source>
    </source>
</evidence>
<evidence type="ECO:0000312" key="6">
    <source>
        <dbReference type="EMBL" id="ABK74710.1"/>
    </source>
</evidence>
<evidence type="ECO:0000312" key="7">
    <source>
        <dbReference type="EMBL" id="AFP40869.1"/>
    </source>
</evidence>
<proteinExistence type="evidence at protein level"/>
<dbReference type="EC" id="1.8.4.10" evidence="1 2"/>
<dbReference type="EMBL" id="CP000480">
    <property type="protein sequence ID" value="ABK74710.1"/>
    <property type="molecule type" value="Genomic_DNA"/>
</dbReference>
<dbReference type="EMBL" id="CP001663">
    <property type="protein sequence ID" value="AFP40869.1"/>
    <property type="status" value="ALT_INIT"/>
    <property type="molecule type" value="Genomic_DNA"/>
</dbReference>
<dbReference type="RefSeq" id="WP_011729897.1">
    <property type="nucleotide sequence ID" value="NZ_SIJM01000052.1"/>
</dbReference>
<dbReference type="RefSeq" id="YP_888800.1">
    <property type="nucleotide sequence ID" value="NC_008596.1"/>
</dbReference>
<dbReference type="SMR" id="A0R0W2"/>
<dbReference type="STRING" id="246196.MSMEG_4528"/>
<dbReference type="PaxDb" id="246196-MSMEI_4415"/>
<dbReference type="KEGG" id="msb:LJ00_22400"/>
<dbReference type="KEGG" id="msg:MSMEI_4415"/>
<dbReference type="KEGG" id="msm:MSMEG_4528"/>
<dbReference type="PATRIC" id="fig|246196.19.peg.4430"/>
<dbReference type="eggNOG" id="COG0175">
    <property type="taxonomic scope" value="Bacteria"/>
</dbReference>
<dbReference type="OrthoDB" id="9794018at2"/>
<dbReference type="Proteomes" id="UP000000757">
    <property type="component" value="Chromosome"/>
</dbReference>
<dbReference type="Proteomes" id="UP000006158">
    <property type="component" value="Chromosome"/>
</dbReference>
<dbReference type="GO" id="GO:0005737">
    <property type="term" value="C:cytoplasm"/>
    <property type="evidence" value="ECO:0007669"/>
    <property type="project" value="UniProtKB-SubCell"/>
</dbReference>
<dbReference type="GO" id="GO:0051539">
    <property type="term" value="F:4 iron, 4 sulfur cluster binding"/>
    <property type="evidence" value="ECO:0007669"/>
    <property type="project" value="UniProtKB-UniRule"/>
</dbReference>
<dbReference type="GO" id="GO:0043866">
    <property type="term" value="F:adenylyl-sulfate reductase (thioredoxin) activity"/>
    <property type="evidence" value="ECO:0007669"/>
    <property type="project" value="UniProtKB-EC"/>
</dbReference>
<dbReference type="GO" id="GO:0046872">
    <property type="term" value="F:metal ion binding"/>
    <property type="evidence" value="ECO:0007669"/>
    <property type="project" value="UniProtKB-KW"/>
</dbReference>
<dbReference type="GO" id="GO:0004604">
    <property type="term" value="F:phosphoadenylyl-sulfate reductase (thioredoxin) activity"/>
    <property type="evidence" value="ECO:0007669"/>
    <property type="project" value="UniProtKB-UniRule"/>
</dbReference>
<dbReference type="GO" id="GO:0019344">
    <property type="term" value="P:cysteine biosynthetic process"/>
    <property type="evidence" value="ECO:0007669"/>
    <property type="project" value="InterPro"/>
</dbReference>
<dbReference type="GO" id="GO:0070814">
    <property type="term" value="P:hydrogen sulfide biosynthetic process"/>
    <property type="evidence" value="ECO:0007669"/>
    <property type="project" value="UniProtKB-UniRule"/>
</dbReference>
<dbReference type="GO" id="GO:0019379">
    <property type="term" value="P:sulfate assimilation, phosphoadenylyl sulfate reduction by phosphoadenylyl-sulfate reductase (thioredoxin)"/>
    <property type="evidence" value="ECO:0007669"/>
    <property type="project" value="UniProtKB-UniRule"/>
</dbReference>
<dbReference type="CDD" id="cd23945">
    <property type="entry name" value="PAPS_reductase"/>
    <property type="match status" value="1"/>
</dbReference>
<dbReference type="Gene3D" id="3.40.50.620">
    <property type="entry name" value="HUPs"/>
    <property type="match status" value="1"/>
</dbReference>
<dbReference type="HAMAP" id="MF_00063">
    <property type="entry name" value="CysH"/>
    <property type="match status" value="1"/>
</dbReference>
<dbReference type="InterPro" id="IPR011798">
    <property type="entry name" value="APS_reductase"/>
</dbReference>
<dbReference type="InterPro" id="IPR004511">
    <property type="entry name" value="PAPS/APS_Rdtase"/>
</dbReference>
<dbReference type="InterPro" id="IPR002500">
    <property type="entry name" value="PAPS_reduct_dom"/>
</dbReference>
<dbReference type="InterPro" id="IPR014729">
    <property type="entry name" value="Rossmann-like_a/b/a_fold"/>
</dbReference>
<dbReference type="NCBIfam" id="TIGR02055">
    <property type="entry name" value="APS_reductase"/>
    <property type="match status" value="1"/>
</dbReference>
<dbReference type="NCBIfam" id="TIGR00434">
    <property type="entry name" value="cysH"/>
    <property type="match status" value="1"/>
</dbReference>
<dbReference type="NCBIfam" id="NF002537">
    <property type="entry name" value="PRK02090.1"/>
    <property type="match status" value="1"/>
</dbReference>
<dbReference type="PANTHER" id="PTHR46509">
    <property type="entry name" value="PHOSPHOADENOSINE PHOSPHOSULFATE REDUCTASE"/>
    <property type="match status" value="1"/>
</dbReference>
<dbReference type="PANTHER" id="PTHR46509:SF1">
    <property type="entry name" value="PHOSPHOADENOSINE PHOSPHOSULFATE REDUCTASE"/>
    <property type="match status" value="1"/>
</dbReference>
<dbReference type="Pfam" id="PF01507">
    <property type="entry name" value="PAPS_reduct"/>
    <property type="match status" value="1"/>
</dbReference>
<dbReference type="PIRSF" id="PIRSF000857">
    <property type="entry name" value="PAPS_reductase"/>
    <property type="match status" value="1"/>
</dbReference>
<dbReference type="SUPFAM" id="SSF52402">
    <property type="entry name" value="Adenine nucleotide alpha hydrolases-like"/>
    <property type="match status" value="1"/>
</dbReference>
<keyword id="KW-0963">Cytoplasm</keyword>
<keyword id="KW-0408">Iron</keyword>
<keyword id="KW-0411">Iron-sulfur</keyword>
<keyword id="KW-0479">Metal-binding</keyword>
<keyword id="KW-0560">Oxidoreductase</keyword>
<keyword id="KW-1185">Reference proteome</keyword>
<gene>
    <name evidence="1 3" type="primary">cysH</name>
    <name evidence="6" type="ordered locus">MSMEG_4528</name>
    <name evidence="7" type="ordered locus">MSMEI_4415</name>
</gene>
<name>CYSH_MYCS2</name>
<organism>
    <name type="scientific">Mycolicibacterium smegmatis (strain ATCC 700084 / mc(2)155)</name>
    <name type="common">Mycobacterium smegmatis</name>
    <dbReference type="NCBI Taxonomy" id="246196"/>
    <lineage>
        <taxon>Bacteria</taxon>
        <taxon>Bacillati</taxon>
        <taxon>Actinomycetota</taxon>
        <taxon>Actinomycetes</taxon>
        <taxon>Mycobacteriales</taxon>
        <taxon>Mycobacteriaceae</taxon>
        <taxon>Mycolicibacterium</taxon>
    </lineage>
</organism>
<reference key="1">
    <citation type="submission" date="2006-10" db="EMBL/GenBank/DDBJ databases">
        <authorList>
            <person name="Fleischmann R.D."/>
            <person name="Dodson R.J."/>
            <person name="Haft D.H."/>
            <person name="Merkel J.S."/>
            <person name="Nelson W.C."/>
            <person name="Fraser C.M."/>
        </authorList>
    </citation>
    <scope>NUCLEOTIDE SEQUENCE [LARGE SCALE GENOMIC DNA]</scope>
    <source>
        <strain>ATCC 700084 / mc(2)155</strain>
    </source>
</reference>
<reference key="2">
    <citation type="journal article" date="2007" name="Genome Biol.">
        <title>Interrupted coding sequences in Mycobacterium smegmatis: authentic mutations or sequencing errors?</title>
        <authorList>
            <person name="Deshayes C."/>
            <person name="Perrodou E."/>
            <person name="Gallien S."/>
            <person name="Euphrasie D."/>
            <person name="Schaeffer C."/>
            <person name="Van-Dorsselaer A."/>
            <person name="Poch O."/>
            <person name="Lecompte O."/>
            <person name="Reyrat J.-M."/>
        </authorList>
    </citation>
    <scope>NUCLEOTIDE SEQUENCE [LARGE SCALE GENOMIC DNA]</scope>
    <source>
        <strain>ATCC 700084 / mc(2)155</strain>
    </source>
</reference>
<reference key="3">
    <citation type="journal article" date="2009" name="Genome Res.">
        <title>Ortho-proteogenomics: multiple proteomes investigation through orthology and a new MS-based protocol.</title>
        <authorList>
            <person name="Gallien S."/>
            <person name="Perrodou E."/>
            <person name="Carapito C."/>
            <person name="Deshayes C."/>
            <person name="Reyrat J.-M."/>
            <person name="Van Dorsselaer A."/>
            <person name="Poch O."/>
            <person name="Schaeffer C."/>
            <person name="Lecompte O."/>
        </authorList>
    </citation>
    <scope>NUCLEOTIDE SEQUENCE [LARGE SCALE GENOMIC DNA]</scope>
    <source>
        <strain>ATCC 700084 / mc(2)155</strain>
    </source>
</reference>
<reference key="4">
    <citation type="journal article" date="2002" name="J. Biol. Chem.">
        <title>5'-adenosinephosphosulfate lies at a metabolic branch point in mycobacteria.</title>
        <authorList>
            <person name="Williams S.J."/>
            <person name="Senaratne R.H."/>
            <person name="Mougous J.D."/>
            <person name="Riley L.W."/>
            <person name="Bertozzi C.R."/>
        </authorList>
    </citation>
    <scope>FUNCTION</scope>
    <scope>CATALYTIC ACTIVITY</scope>
    <scope>PATHWAY</scope>
    <scope>DISRUPTION PHENOTYPE</scope>
    <source>
        <strain>ATCC 700084 / mc(2)155</strain>
    </source>
</reference>